<feature type="chain" id="PRO_0000276629" description="Small ribosomal subunit protein uS12cz/uS12cy">
    <location>
        <begin position="1"/>
        <end position="123"/>
    </location>
</feature>
<keyword id="KW-0150">Chloroplast</keyword>
<keyword id="KW-0934">Plastid</keyword>
<keyword id="KW-0687">Ribonucleoprotein</keyword>
<keyword id="KW-0689">Ribosomal protein</keyword>
<keyword id="KW-0694">RNA-binding</keyword>
<keyword id="KW-0699">rRNA-binding</keyword>
<gene>
    <name type="primary">rps12-A</name>
</gene>
<gene>
    <name type="primary">rps12-B</name>
</gene>
<sequence>MPTIKQLIRNTRQPIRNVTKSPALRGCPQRRGTCTRVYTITPKKPNSALRKVARVRLTSGFEITAYIPGIGHNSQEHSVVLVRGGRVKDLPGVRYHIVRGTLDAVGVKDRQQGRSKYGVKKPK</sequence>
<evidence type="ECO:0000250" key="1"/>
<evidence type="ECO:0000255" key="2">
    <source>
        <dbReference type="HAMAP-Rule" id="MF_00403"/>
    </source>
</evidence>
<evidence type="ECO:0000305" key="3"/>
<protein>
    <recommendedName>
        <fullName evidence="2">Small ribosomal subunit protein uS12cz/uS12cy</fullName>
    </recommendedName>
    <alternativeName>
        <fullName evidence="3">30S ribosomal protein S12, chloroplastic</fullName>
    </alternativeName>
</protein>
<reference key="1">
    <citation type="journal article" date="2006" name="Theor. Appl. Genet.">
        <title>Complete chloroplast genome sequences of Solanum bulbocastanum, Solanum lycopersicum and comparative analyses with other Solanaceae genomes.</title>
        <authorList>
            <person name="Daniell H."/>
            <person name="Lee S.-B."/>
            <person name="Grevich J."/>
            <person name="Saski C."/>
            <person name="Quesada-Vargas T."/>
            <person name="Guda C."/>
            <person name="Tomkins J."/>
            <person name="Jansen R.K."/>
        </authorList>
    </citation>
    <scope>NUCLEOTIDE SEQUENCE [LARGE SCALE GENOMIC DNA]</scope>
    <source>
        <strain>cv. PT29</strain>
    </source>
</reference>
<geneLocation type="chloroplast"/>
<accession>Q2MIK8</accession>
<organism>
    <name type="scientific">Solanum bulbocastanum</name>
    <name type="common">Wild potato</name>
    <dbReference type="NCBI Taxonomy" id="147425"/>
    <lineage>
        <taxon>Eukaryota</taxon>
        <taxon>Viridiplantae</taxon>
        <taxon>Streptophyta</taxon>
        <taxon>Embryophyta</taxon>
        <taxon>Tracheophyta</taxon>
        <taxon>Spermatophyta</taxon>
        <taxon>Magnoliopsida</taxon>
        <taxon>eudicotyledons</taxon>
        <taxon>Gunneridae</taxon>
        <taxon>Pentapetalae</taxon>
        <taxon>asterids</taxon>
        <taxon>lamiids</taxon>
        <taxon>Solanales</taxon>
        <taxon>Solanaceae</taxon>
        <taxon>Solanoideae</taxon>
        <taxon>Solaneae</taxon>
        <taxon>Solanum</taxon>
    </lineage>
</organism>
<name>RR12_SOLBU</name>
<dbReference type="EMBL" id="DQ347958">
    <property type="protein sequence ID" value="ABC56260.1"/>
    <property type="molecule type" value="Genomic_DNA"/>
</dbReference>
<dbReference type="EMBL" id="DQ347958">
    <property type="protein sequence ID" value="ABC56273.1"/>
    <property type="molecule type" value="Genomic_DNA"/>
</dbReference>
<dbReference type="SMR" id="Q2MIK8"/>
<dbReference type="GO" id="GO:0009507">
    <property type="term" value="C:chloroplast"/>
    <property type="evidence" value="ECO:0007669"/>
    <property type="project" value="UniProtKB-SubCell"/>
</dbReference>
<dbReference type="GO" id="GO:0015935">
    <property type="term" value="C:small ribosomal subunit"/>
    <property type="evidence" value="ECO:0007669"/>
    <property type="project" value="InterPro"/>
</dbReference>
<dbReference type="GO" id="GO:0019843">
    <property type="term" value="F:rRNA binding"/>
    <property type="evidence" value="ECO:0007669"/>
    <property type="project" value="UniProtKB-UniRule"/>
</dbReference>
<dbReference type="GO" id="GO:0003735">
    <property type="term" value="F:structural constituent of ribosome"/>
    <property type="evidence" value="ECO:0007669"/>
    <property type="project" value="InterPro"/>
</dbReference>
<dbReference type="GO" id="GO:0006412">
    <property type="term" value="P:translation"/>
    <property type="evidence" value="ECO:0007669"/>
    <property type="project" value="UniProtKB-UniRule"/>
</dbReference>
<dbReference type="CDD" id="cd03368">
    <property type="entry name" value="Ribosomal_S12"/>
    <property type="match status" value="1"/>
</dbReference>
<dbReference type="FunFam" id="2.40.50.140:FF:000008">
    <property type="entry name" value="30S ribosomal protein S12, chloroplastic"/>
    <property type="match status" value="1"/>
</dbReference>
<dbReference type="Gene3D" id="2.40.50.140">
    <property type="entry name" value="Nucleic acid-binding proteins"/>
    <property type="match status" value="1"/>
</dbReference>
<dbReference type="HAMAP" id="MF_00403_B">
    <property type="entry name" value="Ribosomal_uS12_B"/>
    <property type="match status" value="1"/>
</dbReference>
<dbReference type="InterPro" id="IPR012340">
    <property type="entry name" value="NA-bd_OB-fold"/>
</dbReference>
<dbReference type="InterPro" id="IPR006032">
    <property type="entry name" value="Ribosomal_uS12"/>
</dbReference>
<dbReference type="InterPro" id="IPR005679">
    <property type="entry name" value="Ribosomal_uS12_bac"/>
</dbReference>
<dbReference type="NCBIfam" id="TIGR00981">
    <property type="entry name" value="rpsL_bact"/>
    <property type="match status" value="1"/>
</dbReference>
<dbReference type="PANTHER" id="PTHR11652">
    <property type="entry name" value="30S RIBOSOMAL PROTEIN S12 FAMILY MEMBER"/>
    <property type="match status" value="1"/>
</dbReference>
<dbReference type="Pfam" id="PF00164">
    <property type="entry name" value="Ribosom_S12_S23"/>
    <property type="match status" value="1"/>
</dbReference>
<dbReference type="PIRSF" id="PIRSF002133">
    <property type="entry name" value="Ribosomal_S12/S23"/>
    <property type="match status" value="1"/>
</dbReference>
<dbReference type="PRINTS" id="PR01034">
    <property type="entry name" value="RIBOSOMALS12"/>
</dbReference>
<dbReference type="SUPFAM" id="SSF50249">
    <property type="entry name" value="Nucleic acid-binding proteins"/>
    <property type="match status" value="1"/>
</dbReference>
<dbReference type="PROSITE" id="PS00055">
    <property type="entry name" value="RIBOSOMAL_S12"/>
    <property type="match status" value="1"/>
</dbReference>
<comment type="function">
    <text evidence="1">With S4 and S5 plays an important role in translational accuracy. Located at the interface of the 30S and 50S subunits (By similarity).</text>
</comment>
<comment type="subunit">
    <text evidence="1">Part of the 30S ribosomal subunit.</text>
</comment>
<comment type="subcellular location">
    <subcellularLocation>
        <location>Plastid</location>
        <location>Chloroplast</location>
    </subcellularLocation>
</comment>
<comment type="similarity">
    <text evidence="3">Belongs to the universal ribosomal protein uS12 family.</text>
</comment>
<proteinExistence type="inferred from homology"/>